<feature type="chain" id="PRO_0000141088" description="Ribose-phosphate pyrophosphokinase 3">
    <location>
        <begin position="1"/>
        <end position="320"/>
    </location>
</feature>
<feature type="binding site" evidence="1">
    <location>
        <position position="131"/>
    </location>
    <ligand>
        <name>Mg(2+)</name>
        <dbReference type="ChEBI" id="CHEBI:18420"/>
    </ligand>
</feature>
<feature type="binding site" evidence="1">
    <location>
        <position position="133"/>
    </location>
    <ligand>
        <name>Mg(2+)</name>
        <dbReference type="ChEBI" id="CHEBI:18420"/>
    </ligand>
</feature>
<feature type="binding site" evidence="1">
    <location>
        <position position="142"/>
    </location>
    <ligand>
        <name>Mg(2+)</name>
        <dbReference type="ChEBI" id="CHEBI:18420"/>
    </ligand>
</feature>
<feature type="binding site" evidence="1">
    <location>
        <position position="146"/>
    </location>
    <ligand>
        <name>Mg(2+)</name>
        <dbReference type="ChEBI" id="CHEBI:18420"/>
    </ligand>
</feature>
<protein>
    <recommendedName>
        <fullName>Ribose-phosphate pyrophosphokinase 3</fullName>
        <ecNumber>2.7.6.1</ecNumber>
    </recommendedName>
    <alternativeName>
        <fullName>Phosphoribosyl pyrophosphate synthase 3</fullName>
    </alternativeName>
</protein>
<name>KPR3_YEAST</name>
<keyword id="KW-0067">ATP-binding</keyword>
<keyword id="KW-0963">Cytoplasm</keyword>
<keyword id="KW-0418">Kinase</keyword>
<keyword id="KW-0460">Magnesium</keyword>
<keyword id="KW-0479">Metal-binding</keyword>
<keyword id="KW-0545">Nucleotide biosynthesis</keyword>
<keyword id="KW-0547">Nucleotide-binding</keyword>
<keyword id="KW-1185">Reference proteome</keyword>
<keyword id="KW-0808">Transferase</keyword>
<organism>
    <name type="scientific">Saccharomyces cerevisiae (strain ATCC 204508 / S288c)</name>
    <name type="common">Baker's yeast</name>
    <dbReference type="NCBI Taxonomy" id="559292"/>
    <lineage>
        <taxon>Eukaryota</taxon>
        <taxon>Fungi</taxon>
        <taxon>Dikarya</taxon>
        <taxon>Ascomycota</taxon>
        <taxon>Saccharomycotina</taxon>
        <taxon>Saccharomycetes</taxon>
        <taxon>Saccharomycetales</taxon>
        <taxon>Saccharomycetaceae</taxon>
        <taxon>Saccharomyces</taxon>
    </lineage>
</organism>
<evidence type="ECO:0000255" key="1"/>
<evidence type="ECO:0000269" key="2">
    <source>
    </source>
</evidence>
<evidence type="ECO:0000269" key="3">
    <source>
    </source>
</evidence>
<evidence type="ECO:0000269" key="4">
    <source>
    </source>
</evidence>
<evidence type="ECO:0000269" key="5">
    <source>
    </source>
</evidence>
<evidence type="ECO:0000305" key="6"/>
<dbReference type="EC" id="2.7.6.1"/>
<dbReference type="EMBL" id="X74415">
    <property type="protein sequence ID" value="CAA52437.1"/>
    <property type="molecule type" value="Genomic_DNA"/>
</dbReference>
<dbReference type="EMBL" id="U11582">
    <property type="protein sequence ID" value="AAB65063.1"/>
    <property type="molecule type" value="Genomic_DNA"/>
</dbReference>
<dbReference type="EMBL" id="AY693094">
    <property type="protein sequence ID" value="AAT93113.1"/>
    <property type="molecule type" value="Genomic_DNA"/>
</dbReference>
<dbReference type="EMBL" id="BK006934">
    <property type="protein sequence ID" value="DAA06675.1"/>
    <property type="molecule type" value="Genomic_DNA"/>
</dbReference>
<dbReference type="PIR" id="S46824">
    <property type="entry name" value="S46824"/>
</dbReference>
<dbReference type="RefSeq" id="NP_011852.1">
    <property type="nucleotide sequence ID" value="NM_001179091.1"/>
</dbReference>
<dbReference type="SMR" id="P38689"/>
<dbReference type="BioGRID" id="36412">
    <property type="interactions" value="87"/>
</dbReference>
<dbReference type="DIP" id="DIP-4307N"/>
<dbReference type="FunCoup" id="P38689">
    <property type="interactions" value="556"/>
</dbReference>
<dbReference type="IntAct" id="P38689">
    <property type="interactions" value="58"/>
</dbReference>
<dbReference type="MINT" id="P38689"/>
<dbReference type="STRING" id="4932.YHL011C"/>
<dbReference type="iPTMnet" id="P38689"/>
<dbReference type="PaxDb" id="4932-YHL011C"/>
<dbReference type="PeptideAtlas" id="P38689"/>
<dbReference type="EnsemblFungi" id="YHL011C_mRNA">
    <property type="protein sequence ID" value="YHL011C"/>
    <property type="gene ID" value="YHL011C"/>
</dbReference>
<dbReference type="GeneID" id="856375"/>
<dbReference type="KEGG" id="sce:YHL011C"/>
<dbReference type="AGR" id="SGD:S000001003"/>
<dbReference type="SGD" id="S000001003">
    <property type="gene designation" value="PRS3"/>
</dbReference>
<dbReference type="VEuPathDB" id="FungiDB:YHL011C"/>
<dbReference type="eggNOG" id="KOG1448">
    <property type="taxonomic scope" value="Eukaryota"/>
</dbReference>
<dbReference type="GeneTree" id="ENSGT00950000182803"/>
<dbReference type="HOGENOM" id="CLU_033546_4_0_1"/>
<dbReference type="InParanoid" id="P38689"/>
<dbReference type="OMA" id="MANNSIK"/>
<dbReference type="OrthoDB" id="413572at2759"/>
<dbReference type="BioCyc" id="YEAST:YHL011C-MONOMER"/>
<dbReference type="Reactome" id="R-SCE-73843">
    <property type="pathway name" value="5-Phosphoribose 1-diphosphate biosynthesis"/>
</dbReference>
<dbReference type="UniPathway" id="UPA00087">
    <property type="reaction ID" value="UER00172"/>
</dbReference>
<dbReference type="BioGRID-ORCS" id="856375">
    <property type="hits" value="3 hits in 10 CRISPR screens"/>
</dbReference>
<dbReference type="CD-CODE" id="E03F929F">
    <property type="entry name" value="Stress granule"/>
</dbReference>
<dbReference type="PRO" id="PR:P38689"/>
<dbReference type="Proteomes" id="UP000002311">
    <property type="component" value="Chromosome VIII"/>
</dbReference>
<dbReference type="RNAct" id="P38689">
    <property type="molecule type" value="protein"/>
</dbReference>
<dbReference type="GO" id="GO:0005737">
    <property type="term" value="C:cytoplasm"/>
    <property type="evidence" value="ECO:0007005"/>
    <property type="project" value="SGD"/>
</dbReference>
<dbReference type="GO" id="GO:0002189">
    <property type="term" value="C:ribose phosphate diphosphokinase complex"/>
    <property type="evidence" value="ECO:0000314"/>
    <property type="project" value="SGD"/>
</dbReference>
<dbReference type="GO" id="GO:0005524">
    <property type="term" value="F:ATP binding"/>
    <property type="evidence" value="ECO:0007669"/>
    <property type="project" value="UniProtKB-KW"/>
</dbReference>
<dbReference type="GO" id="GO:0016301">
    <property type="term" value="F:kinase activity"/>
    <property type="evidence" value="ECO:0007669"/>
    <property type="project" value="UniProtKB-KW"/>
</dbReference>
<dbReference type="GO" id="GO:0000287">
    <property type="term" value="F:magnesium ion binding"/>
    <property type="evidence" value="ECO:0007669"/>
    <property type="project" value="InterPro"/>
</dbReference>
<dbReference type="GO" id="GO:0004749">
    <property type="term" value="F:ribose phosphate diphosphokinase activity"/>
    <property type="evidence" value="ECO:0007669"/>
    <property type="project" value="UniProtKB-EC"/>
</dbReference>
<dbReference type="GO" id="GO:0006015">
    <property type="term" value="P:5-phosphoribose 1-diphosphate biosynthetic process"/>
    <property type="evidence" value="ECO:0000315"/>
    <property type="project" value="SGD"/>
</dbReference>
<dbReference type="GO" id="GO:0006164">
    <property type="term" value="P:purine nucleotide biosynthetic process"/>
    <property type="evidence" value="ECO:0000318"/>
    <property type="project" value="GO_Central"/>
</dbReference>
<dbReference type="GO" id="GO:0009156">
    <property type="term" value="P:ribonucleoside monophosphate biosynthetic process"/>
    <property type="evidence" value="ECO:0007669"/>
    <property type="project" value="InterPro"/>
</dbReference>
<dbReference type="CDD" id="cd06223">
    <property type="entry name" value="PRTases_typeI"/>
    <property type="match status" value="1"/>
</dbReference>
<dbReference type="FunFam" id="3.40.50.2020:FF:000005">
    <property type="entry name" value="Ribose-phosphate pyrophosphokinase 1"/>
    <property type="match status" value="1"/>
</dbReference>
<dbReference type="Gene3D" id="3.40.50.2020">
    <property type="match status" value="2"/>
</dbReference>
<dbReference type="InterPro" id="IPR000842">
    <property type="entry name" value="PRib_PP_synth_CS"/>
</dbReference>
<dbReference type="InterPro" id="IPR029099">
    <property type="entry name" value="Pribosyltran_N"/>
</dbReference>
<dbReference type="InterPro" id="IPR000836">
    <property type="entry name" value="PRibTrfase_dom"/>
</dbReference>
<dbReference type="InterPro" id="IPR029057">
    <property type="entry name" value="PRTase-like"/>
</dbReference>
<dbReference type="InterPro" id="IPR005946">
    <property type="entry name" value="Rib-P_diPkinase"/>
</dbReference>
<dbReference type="NCBIfam" id="NF002320">
    <property type="entry name" value="PRK01259.1"/>
    <property type="match status" value="1"/>
</dbReference>
<dbReference type="NCBIfam" id="TIGR01251">
    <property type="entry name" value="ribP_PPkin"/>
    <property type="match status" value="1"/>
</dbReference>
<dbReference type="PANTHER" id="PTHR10210">
    <property type="entry name" value="RIBOSE-PHOSPHATE DIPHOSPHOKINASE FAMILY MEMBER"/>
    <property type="match status" value="1"/>
</dbReference>
<dbReference type="PANTHER" id="PTHR10210:SF48">
    <property type="entry name" value="RIBOSE-PHOSPHATE PYROPHOSPHOKINASE 3"/>
    <property type="match status" value="1"/>
</dbReference>
<dbReference type="Pfam" id="PF14572">
    <property type="entry name" value="Pribosyl_synth"/>
    <property type="match status" value="1"/>
</dbReference>
<dbReference type="Pfam" id="PF13793">
    <property type="entry name" value="Pribosyltran_N"/>
    <property type="match status" value="1"/>
</dbReference>
<dbReference type="SMART" id="SM01400">
    <property type="entry name" value="Pribosyltran_N"/>
    <property type="match status" value="1"/>
</dbReference>
<dbReference type="SUPFAM" id="SSF53271">
    <property type="entry name" value="PRTase-like"/>
    <property type="match status" value="1"/>
</dbReference>
<dbReference type="PROSITE" id="PS00114">
    <property type="entry name" value="PRPP_SYNTHASE"/>
    <property type="match status" value="1"/>
</dbReference>
<accession>P38689</accession>
<accession>D3DKQ2</accession>
<sequence>MPTNSIKLLAPDVHRGLAELVAKRLGLQLTSSKLKRDPTGEVSFSIGESVRDQDIFIITQIGSGVVNDRVLELLIMINASKTASARRITAIIPNFPYARQDRKDKSRAPITAKLMADMLTTAGCDHVITMDLHASQIQGFFDVPVDNLYAEPSVVRYIKENVNYMDSIIISPDAGGAKRAATLADRLDLNFALIHKERARANEVSRMVLVGDVTDKICIIVDDMADTCGTLAKAAEILLENRAKSVIAIVTHGVLSGRAIENINNSKLDRVVCTNTVPFEEKIKKCPKLAVIDISSVLAESIRRLHNGESISYLFKNYPL</sequence>
<gene>
    <name type="primary">PRS3</name>
    <name type="synonym">PRPS3</name>
    <name type="ordered locus">YHL011C</name>
</gene>
<proteinExistence type="evidence at protein level"/>
<reference key="1">
    <citation type="journal article" date="1994" name="Yeast">
        <title>Phosphoribosylpyrophosphate synthetase (PRS): a new gene family in Saccharomyces cerevisiae.</title>
        <authorList>
            <person name="Carter A.T."/>
            <person name="Narbad A."/>
            <person name="Pearson B.M."/>
            <person name="Beck K.-F."/>
            <person name="Logghe M."/>
            <person name="Contreras R."/>
            <person name="Schweizer M."/>
        </authorList>
    </citation>
    <scope>NUCLEOTIDE SEQUENCE [GENOMIC DNA]</scope>
    <source>
        <strain>ATCC 44827 / SKQ2N</strain>
    </source>
</reference>
<reference key="2">
    <citation type="journal article" date="1995" name="Yeast">
        <authorList>
            <person name="Carter A.T."/>
            <person name="Narbad A."/>
            <person name="Pearson B.M."/>
            <person name="Beck K.-F."/>
            <person name="Logghe M."/>
            <person name="Contreras R."/>
            <person name="Schweizer M."/>
        </authorList>
    </citation>
    <scope>ERRATUM OF PUBMED:7992503</scope>
</reference>
<reference key="3">
    <citation type="journal article" date="1994" name="Science">
        <title>Complete nucleotide sequence of Saccharomyces cerevisiae chromosome VIII.</title>
        <authorList>
            <person name="Johnston M."/>
            <person name="Andrews S."/>
            <person name="Brinkman R."/>
            <person name="Cooper J."/>
            <person name="Ding H."/>
            <person name="Dover J."/>
            <person name="Du Z."/>
            <person name="Favello A."/>
            <person name="Fulton L."/>
            <person name="Gattung S."/>
            <person name="Geisel C."/>
            <person name="Kirsten J."/>
            <person name="Kucaba T."/>
            <person name="Hillier L.W."/>
            <person name="Jier M."/>
            <person name="Johnston L."/>
            <person name="Langston Y."/>
            <person name="Latreille P."/>
            <person name="Louis E.J."/>
            <person name="Macri C."/>
            <person name="Mardis E."/>
            <person name="Menezes S."/>
            <person name="Mouser L."/>
            <person name="Nhan M."/>
            <person name="Rifkin L."/>
            <person name="Riles L."/>
            <person name="St Peter H."/>
            <person name="Trevaskis E."/>
            <person name="Vaughan K."/>
            <person name="Vignati D."/>
            <person name="Wilcox L."/>
            <person name="Wohldman P."/>
            <person name="Waterston R."/>
            <person name="Wilson R."/>
            <person name="Vaudin M."/>
        </authorList>
    </citation>
    <scope>NUCLEOTIDE SEQUENCE [LARGE SCALE GENOMIC DNA]</scope>
    <source>
        <strain>ATCC 204508 / S288c</strain>
    </source>
</reference>
<reference key="4">
    <citation type="journal article" date="2014" name="G3 (Bethesda)">
        <title>The reference genome sequence of Saccharomyces cerevisiae: Then and now.</title>
        <authorList>
            <person name="Engel S.R."/>
            <person name="Dietrich F.S."/>
            <person name="Fisk D.G."/>
            <person name="Binkley G."/>
            <person name="Balakrishnan R."/>
            <person name="Costanzo M.C."/>
            <person name="Dwight S.S."/>
            <person name="Hitz B.C."/>
            <person name="Karra K."/>
            <person name="Nash R.S."/>
            <person name="Weng S."/>
            <person name="Wong E.D."/>
            <person name="Lloyd P."/>
            <person name="Skrzypek M.S."/>
            <person name="Miyasato S.R."/>
            <person name="Simison M."/>
            <person name="Cherry J.M."/>
        </authorList>
    </citation>
    <scope>GENOME REANNOTATION</scope>
    <source>
        <strain>ATCC 204508 / S288c</strain>
    </source>
</reference>
<reference key="5">
    <citation type="journal article" date="2007" name="Genome Res.">
        <title>Approaching a complete repository of sequence-verified protein-encoding clones for Saccharomyces cerevisiae.</title>
        <authorList>
            <person name="Hu Y."/>
            <person name="Rolfs A."/>
            <person name="Bhullar B."/>
            <person name="Murthy T.V.S."/>
            <person name="Zhu C."/>
            <person name="Berger M.F."/>
            <person name="Camargo A.A."/>
            <person name="Kelley F."/>
            <person name="McCarron S."/>
            <person name="Jepson D."/>
            <person name="Richardson A."/>
            <person name="Raphael J."/>
            <person name="Moreira D."/>
            <person name="Taycher E."/>
            <person name="Zuo D."/>
            <person name="Mohr S."/>
            <person name="Kane M.F."/>
            <person name="Williamson J."/>
            <person name="Simpson A.J.G."/>
            <person name="Bulyk M.L."/>
            <person name="Harlow E."/>
            <person name="Marsischky G."/>
            <person name="Kolodner R.D."/>
            <person name="LaBaer J."/>
        </authorList>
    </citation>
    <scope>NUCLEOTIDE SEQUENCE [GENOMIC DNA]</scope>
    <source>
        <strain>ATCC 204508 / S288c</strain>
    </source>
</reference>
<reference key="6">
    <citation type="journal article" date="1999" name="J. Biol. Chem.">
        <title>Genetic analysis and enzyme activity suggest the existence of more than one minimal functional unit capable of synthesizing phosphoribosyl pyrophosphate in Saccharomyces cerevisiae.</title>
        <authorList>
            <person name="Hernando Y."/>
            <person name="Carter A.T."/>
            <person name="Parr A."/>
            <person name="Hove-Jensen B."/>
            <person name="Schweizer M."/>
        </authorList>
    </citation>
    <scope>FUNCTION</scope>
    <scope>ENZYME ACTIVITY</scope>
</reference>
<reference key="7">
    <citation type="journal article" date="1999" name="Yeast">
        <title>The yeast PRS3 gene is required for cell integrity, cell cycle arrest upon nutrient deprivation, ion homeostasis and the proper organization of the actin cytoskeleton.</title>
        <authorList>
            <person name="Binley K.M."/>
            <person name="Radcliffe P.A."/>
            <person name="Trevethick J."/>
            <person name="Duffy K.A."/>
            <person name="Sudbery P.E."/>
        </authorList>
    </citation>
    <scope>DISRUPTION PHENOTYPE</scope>
</reference>
<reference key="8">
    <citation type="journal article" date="2003" name="Nature">
        <title>Global analysis of protein localization in budding yeast.</title>
        <authorList>
            <person name="Huh W.-K."/>
            <person name="Falvo J.V."/>
            <person name="Gerke L.C."/>
            <person name="Carroll A.S."/>
            <person name="Howson R.W."/>
            <person name="Weissman J.S."/>
            <person name="O'Shea E.K."/>
        </authorList>
    </citation>
    <scope>SUBCELLULAR LOCATION [LARGE SCALE ANALYSIS]</scope>
</reference>
<reference key="9">
    <citation type="journal article" date="2004" name="J. Biol. Chem.">
        <title>Heterooligomeric phosphoribosyl diphosphate synthase of Saccharomyces cerevisiae: combinatorial expression of the five PRS genes in Escherichia coli.</title>
        <authorList>
            <person name="Hove-Jensen B."/>
        </authorList>
    </citation>
    <scope>FUNCTION</scope>
    <scope>ENZYME ACTIVITY</scope>
</reference>
<reference key="10">
    <citation type="journal article" date="2012" name="Proc. Natl. Acad. Sci. U.S.A.">
        <title>N-terminal acetylome analyses and functional insights of the N-terminal acetyltransferase NatB.</title>
        <authorList>
            <person name="Van Damme P."/>
            <person name="Lasa M."/>
            <person name="Polevoda B."/>
            <person name="Gazquez C."/>
            <person name="Elosegui-Artola A."/>
            <person name="Kim D.S."/>
            <person name="De Juan-Pardo E."/>
            <person name="Demeyer K."/>
            <person name="Hole K."/>
            <person name="Larrea E."/>
            <person name="Timmerman E."/>
            <person name="Prieto J."/>
            <person name="Arnesen T."/>
            <person name="Sherman F."/>
            <person name="Gevaert K."/>
            <person name="Aldabe R."/>
        </authorList>
    </citation>
    <scope>IDENTIFICATION BY MASS SPECTROMETRY [LARGE SCALE ANALYSIS]</scope>
</reference>
<comment type="function">
    <text evidence="2 5">5-phosphoribose 1-diphosphate synthase involved in nucleotide, histidine, and tryptophan biosynthesis. Active in heteromultimeric complexes with other 5-phosphoribose 1-diphosphate synthases (PRS2, PRS3, PRS4 and PRS5).</text>
</comment>
<comment type="catalytic activity">
    <reaction evidence="2 5">
        <text>D-ribose 5-phosphate + ATP = 5-phospho-alpha-D-ribose 1-diphosphate + AMP + H(+)</text>
        <dbReference type="Rhea" id="RHEA:15609"/>
        <dbReference type="ChEBI" id="CHEBI:15378"/>
        <dbReference type="ChEBI" id="CHEBI:30616"/>
        <dbReference type="ChEBI" id="CHEBI:58017"/>
        <dbReference type="ChEBI" id="CHEBI:78346"/>
        <dbReference type="ChEBI" id="CHEBI:456215"/>
        <dbReference type="EC" id="2.7.6.1"/>
    </reaction>
</comment>
<comment type="pathway">
    <text>Metabolic intermediate biosynthesis; 5-phospho-alpha-D-ribose 1-diphosphate biosynthesis; 5-phospho-alpha-D-ribose 1-diphosphate from D-ribose 5-phosphate (route I): step 1/1.</text>
</comment>
<comment type="interaction">
    <interactant intactId="EBI-9877">
        <id>P38689</id>
    </interactant>
    <interactant intactId="EBI-9869">
        <id>P32895</id>
        <label>PRS1</label>
    </interactant>
    <organismsDiffer>false</organismsDiffer>
    <experiments>6</experiments>
</comment>
<comment type="interaction">
    <interactant intactId="EBI-9877">
        <id>P38689</id>
    </interactant>
    <interactant intactId="EBI-9882">
        <id>P38063</id>
        <label>PRS4</label>
    </interactant>
    <organismsDiffer>false</organismsDiffer>
    <experiments>2</experiments>
</comment>
<comment type="interaction">
    <interactant intactId="EBI-9877">
        <id>P38689</id>
    </interactant>
    <interactant intactId="EBI-9886">
        <id>Q12265</id>
        <label>PRS5</label>
    </interactant>
    <organismsDiffer>false</organismsDiffer>
    <experiments>3</experiments>
</comment>
<comment type="subcellular location">
    <subcellularLocation>
        <location evidence="4">Cytoplasm</location>
    </subcellularLocation>
</comment>
<comment type="disruption phenotype">
    <text evidence="3">Cells fail to arrest in G1, cells remain budded and a significant fraction has a G2 DNA content. In such conditions, deletion mutants have a disorganized actin cytoskeleton and actin accumulates in one or two intensely staining clumps per cell. Deletion mutants also show defects in ion homeostasis and cell integrity. They fail to grow on medium containing 1.0 M NaCl, 5 mM caffeine or when incubated at 37 degrees Celsius. The caffeine and temperature sensitivity are rescued by supplementing the growth medium with 1.0 M sorbitol.</text>
</comment>
<comment type="similarity">
    <text evidence="6">Belongs to the ribose-phosphate pyrophosphokinase family.</text>
</comment>